<dbReference type="EMBL" id="U68058">
    <property type="protein sequence ID" value="AAC53135.1"/>
    <property type="molecule type" value="mRNA"/>
</dbReference>
<dbReference type="EMBL" id="U91905">
    <property type="protein sequence ID" value="AAB51300.1"/>
    <property type="molecule type" value="mRNA"/>
</dbReference>
<dbReference type="EMBL" id="U88568">
    <property type="protein sequence ID" value="AAC53147.1"/>
    <property type="molecule type" value="mRNA"/>
</dbReference>
<dbReference type="EMBL" id="AK019093">
    <property type="protein sequence ID" value="BAB31542.1"/>
    <property type="molecule type" value="mRNA"/>
</dbReference>
<dbReference type="EMBL" id="AK029941">
    <property type="protein sequence ID" value="BAC26690.1"/>
    <property type="molecule type" value="mRNA"/>
</dbReference>
<dbReference type="EMBL" id="BC016884">
    <property type="protein sequence ID" value="AAH16884.1"/>
    <property type="molecule type" value="mRNA"/>
</dbReference>
<dbReference type="CCDS" id="CCDS16176.1"/>
<dbReference type="RefSeq" id="NP_035486.1">
    <property type="nucleotide sequence ID" value="NM_011356.4"/>
</dbReference>
<dbReference type="PDB" id="1IJX">
    <property type="method" value="X-ray"/>
    <property type="resolution" value="1.90 A"/>
    <property type="chains" value="A/B/C/D/E/F=33-157"/>
</dbReference>
<dbReference type="PDBsum" id="1IJX"/>
<dbReference type="SMR" id="P97401"/>
<dbReference type="BioGRID" id="203186">
    <property type="interactions" value="2"/>
</dbReference>
<dbReference type="FunCoup" id="P97401">
    <property type="interactions" value="397"/>
</dbReference>
<dbReference type="IntAct" id="P97401">
    <property type="interactions" value="1"/>
</dbReference>
<dbReference type="STRING" id="10090.ENSMUSP00000028389"/>
<dbReference type="GlyCosmos" id="P97401">
    <property type="glycosylation" value="1 site, No reported glycans"/>
</dbReference>
<dbReference type="GlyGen" id="P97401">
    <property type="glycosylation" value="1 site, 1 N-linked glycan (1 site)"/>
</dbReference>
<dbReference type="PhosphoSitePlus" id="P97401"/>
<dbReference type="SwissPalm" id="P97401"/>
<dbReference type="jPOST" id="P97401"/>
<dbReference type="PaxDb" id="10090-ENSMUSP00000028389"/>
<dbReference type="PeptideAtlas" id="P97401"/>
<dbReference type="ProteomicsDB" id="256782"/>
<dbReference type="Antibodypedia" id="3981">
    <property type="antibodies" value="352 antibodies from 30 providers"/>
</dbReference>
<dbReference type="DNASU" id="20378"/>
<dbReference type="Ensembl" id="ENSMUST00000028389.4">
    <property type="protein sequence ID" value="ENSMUSP00000028389.4"/>
    <property type="gene ID" value="ENSMUSG00000027004.4"/>
</dbReference>
<dbReference type="GeneID" id="20378"/>
<dbReference type="KEGG" id="mmu:20378"/>
<dbReference type="UCSC" id="uc008khl.1">
    <property type="organism name" value="mouse"/>
</dbReference>
<dbReference type="AGR" id="MGI:892032"/>
<dbReference type="CTD" id="2487"/>
<dbReference type="MGI" id="MGI:892032">
    <property type="gene designation" value="Frzb"/>
</dbReference>
<dbReference type="VEuPathDB" id="HostDB:ENSMUSG00000027004"/>
<dbReference type="eggNOG" id="KOG3577">
    <property type="taxonomic scope" value="Eukaryota"/>
</dbReference>
<dbReference type="GeneTree" id="ENSGT00940000160494"/>
<dbReference type="HOGENOM" id="CLU_058446_1_0_1"/>
<dbReference type="InParanoid" id="P97401"/>
<dbReference type="OMA" id="NAERCKC"/>
<dbReference type="OrthoDB" id="5946121at2759"/>
<dbReference type="PhylomeDB" id="P97401"/>
<dbReference type="BioGRID-ORCS" id="20378">
    <property type="hits" value="1 hit in 77 CRISPR screens"/>
</dbReference>
<dbReference type="ChiTaRS" id="Frzb">
    <property type="organism name" value="mouse"/>
</dbReference>
<dbReference type="EvolutionaryTrace" id="P97401"/>
<dbReference type="PRO" id="PR:P97401"/>
<dbReference type="Proteomes" id="UP000000589">
    <property type="component" value="Chromosome 2"/>
</dbReference>
<dbReference type="RNAct" id="P97401">
    <property type="molecule type" value="protein"/>
</dbReference>
<dbReference type="Bgee" id="ENSMUSG00000027004">
    <property type="expression patterns" value="Expressed in skeleton of lower jaw and 277 other cell types or tissues"/>
</dbReference>
<dbReference type="GO" id="GO:0005576">
    <property type="term" value="C:extracellular region"/>
    <property type="evidence" value="ECO:0000303"/>
    <property type="project" value="UniProtKB"/>
</dbReference>
<dbReference type="GO" id="GO:0005615">
    <property type="term" value="C:extracellular space"/>
    <property type="evidence" value="ECO:0007005"/>
    <property type="project" value="BHF-UCL"/>
</dbReference>
<dbReference type="GO" id="GO:0017147">
    <property type="term" value="F:Wnt-protein binding"/>
    <property type="evidence" value="ECO:0000314"/>
    <property type="project" value="UniProtKB"/>
</dbReference>
<dbReference type="GO" id="GO:0090103">
    <property type="term" value="P:cochlea morphogenesis"/>
    <property type="evidence" value="ECO:0000316"/>
    <property type="project" value="MGI"/>
</dbReference>
<dbReference type="GO" id="GO:0060029">
    <property type="term" value="P:convergent extension involved in organogenesis"/>
    <property type="evidence" value="ECO:0000316"/>
    <property type="project" value="MGI"/>
</dbReference>
<dbReference type="GO" id="GO:0002064">
    <property type="term" value="P:epithelial cell development"/>
    <property type="evidence" value="ECO:0000314"/>
    <property type="project" value="MGI"/>
</dbReference>
<dbReference type="GO" id="GO:0070365">
    <property type="term" value="P:hepatocyte differentiation"/>
    <property type="evidence" value="ECO:0000314"/>
    <property type="project" value="MGI"/>
</dbReference>
<dbReference type="GO" id="GO:0042472">
    <property type="term" value="P:inner ear morphogenesis"/>
    <property type="evidence" value="ECO:0000314"/>
    <property type="project" value="MGI"/>
</dbReference>
<dbReference type="GO" id="GO:0090090">
    <property type="term" value="P:negative regulation of canonical Wnt signaling pathway"/>
    <property type="evidence" value="ECO:0000316"/>
    <property type="project" value="MGI"/>
</dbReference>
<dbReference type="GO" id="GO:0061037">
    <property type="term" value="P:negative regulation of cartilage development"/>
    <property type="evidence" value="ECO:0000316"/>
    <property type="project" value="MGI"/>
</dbReference>
<dbReference type="GO" id="GO:0010721">
    <property type="term" value="P:negative regulation of cell development"/>
    <property type="evidence" value="ECO:0000314"/>
    <property type="project" value="MGI"/>
</dbReference>
<dbReference type="GO" id="GO:0030308">
    <property type="term" value="P:negative regulation of cell growth"/>
    <property type="evidence" value="ECO:0007669"/>
    <property type="project" value="Ensembl"/>
</dbReference>
<dbReference type="GO" id="GO:0008285">
    <property type="term" value="P:negative regulation of cell population proliferation"/>
    <property type="evidence" value="ECO:0007669"/>
    <property type="project" value="Ensembl"/>
</dbReference>
<dbReference type="GO" id="GO:0070367">
    <property type="term" value="P:negative regulation of hepatocyte differentiation"/>
    <property type="evidence" value="ECO:0000314"/>
    <property type="project" value="MGI"/>
</dbReference>
<dbReference type="GO" id="GO:0030178">
    <property type="term" value="P:negative regulation of Wnt signaling pathway"/>
    <property type="evidence" value="ECO:0000314"/>
    <property type="project" value="UniProtKB"/>
</dbReference>
<dbReference type="GO" id="GO:0014033">
    <property type="term" value="P:neural crest cell differentiation"/>
    <property type="evidence" value="ECO:0000270"/>
    <property type="project" value="BHF-UCL"/>
</dbReference>
<dbReference type="GO" id="GO:0043065">
    <property type="term" value="P:positive regulation of apoptotic process"/>
    <property type="evidence" value="ECO:0000266"/>
    <property type="project" value="MGI"/>
</dbReference>
<dbReference type="GO" id="GO:0045600">
    <property type="term" value="P:positive regulation of fat cell differentiation"/>
    <property type="evidence" value="ECO:0000266"/>
    <property type="project" value="MGI"/>
</dbReference>
<dbReference type="GO" id="GO:0061053">
    <property type="term" value="P:somite development"/>
    <property type="evidence" value="ECO:0000270"/>
    <property type="project" value="BHF-UCL"/>
</dbReference>
<dbReference type="GO" id="GO:0016055">
    <property type="term" value="P:Wnt signaling pathway"/>
    <property type="evidence" value="ECO:0007669"/>
    <property type="project" value="UniProtKB-KW"/>
</dbReference>
<dbReference type="CDD" id="cd07441">
    <property type="entry name" value="CRD_SFRP3"/>
    <property type="match status" value="1"/>
</dbReference>
<dbReference type="CDD" id="cd03581">
    <property type="entry name" value="NTR_Sfrp3_like"/>
    <property type="match status" value="1"/>
</dbReference>
<dbReference type="FunFam" id="2.40.50.120:FF:000010">
    <property type="entry name" value="secreted frizzled-related protein 3"/>
    <property type="match status" value="1"/>
</dbReference>
<dbReference type="FunFam" id="1.10.2000.10:FF:000005">
    <property type="entry name" value="secreted frizzled-related protein 4"/>
    <property type="match status" value="1"/>
</dbReference>
<dbReference type="Gene3D" id="2.40.50.120">
    <property type="match status" value="1"/>
</dbReference>
<dbReference type="Gene3D" id="1.10.2000.10">
    <property type="entry name" value="Frizzled cysteine-rich domain"/>
    <property type="match status" value="1"/>
</dbReference>
<dbReference type="InterPro" id="IPR015526">
    <property type="entry name" value="Frizzled/SFRP"/>
</dbReference>
<dbReference type="InterPro" id="IPR020067">
    <property type="entry name" value="Frizzled_dom"/>
</dbReference>
<dbReference type="InterPro" id="IPR036790">
    <property type="entry name" value="Frizzled_dom_sf"/>
</dbReference>
<dbReference type="InterPro" id="IPR001134">
    <property type="entry name" value="Netrin_domain"/>
</dbReference>
<dbReference type="InterPro" id="IPR018933">
    <property type="entry name" value="Netrin_module_non-TIMP"/>
</dbReference>
<dbReference type="InterPro" id="IPR035813">
    <property type="entry name" value="NTR_Sfrp3"/>
</dbReference>
<dbReference type="InterPro" id="IPR041759">
    <property type="entry name" value="SFRP3_CRD"/>
</dbReference>
<dbReference type="InterPro" id="IPR008993">
    <property type="entry name" value="TIMP-like_OB-fold"/>
</dbReference>
<dbReference type="PANTHER" id="PTHR11309">
    <property type="entry name" value="FRIZZLED"/>
    <property type="match status" value="1"/>
</dbReference>
<dbReference type="PANTHER" id="PTHR11309:SF97">
    <property type="entry name" value="SECRETED FRIZZLED-RELATED PROTEIN 3"/>
    <property type="match status" value="1"/>
</dbReference>
<dbReference type="Pfam" id="PF01392">
    <property type="entry name" value="Fz"/>
    <property type="match status" value="1"/>
</dbReference>
<dbReference type="Pfam" id="PF01759">
    <property type="entry name" value="NTR"/>
    <property type="match status" value="1"/>
</dbReference>
<dbReference type="SMART" id="SM00643">
    <property type="entry name" value="C345C"/>
    <property type="match status" value="1"/>
</dbReference>
<dbReference type="SMART" id="SM00063">
    <property type="entry name" value="FRI"/>
    <property type="match status" value="1"/>
</dbReference>
<dbReference type="SUPFAM" id="SSF63501">
    <property type="entry name" value="Frizzled cysteine-rich domain"/>
    <property type="match status" value="1"/>
</dbReference>
<dbReference type="SUPFAM" id="SSF50242">
    <property type="entry name" value="TIMP-like"/>
    <property type="match status" value="1"/>
</dbReference>
<dbReference type="PROSITE" id="PS50038">
    <property type="entry name" value="FZ"/>
    <property type="match status" value="1"/>
</dbReference>
<dbReference type="PROSITE" id="PS50189">
    <property type="entry name" value="NTR"/>
    <property type="match status" value="1"/>
</dbReference>
<reference key="1">
    <citation type="journal article" date="1997" name="Cell">
        <title>Frzb-1 is a secreted antagonist of Wnt signaling expressed in the Spemann organizer.</title>
        <authorList>
            <person name="Leyns L."/>
            <person name="Bouwmeester T."/>
            <person name="Kim S.-H."/>
            <person name="Piccolo S."/>
            <person name="de Robertis E.M."/>
        </authorList>
    </citation>
    <scope>NUCLEOTIDE SEQUENCE [MRNA]</scope>
</reference>
<reference key="2">
    <citation type="journal article" date="1997" name="Mech. Dev.">
        <title>Fritz: a secreted frizzled-related protein that inhibits Wnt activity.</title>
        <authorList>
            <person name="Mayr T."/>
            <person name="Deutsch U."/>
            <person name="Kuehl M."/>
            <person name="Drexler H.C.A."/>
            <person name="Lottspeich F."/>
            <person name="Deutzmann R."/>
            <person name="Wedlich D."/>
            <person name="Risau W."/>
        </authorList>
    </citation>
    <scope>NUCLEOTIDE SEQUENCE [MRNA]</scope>
    <scope>FUNCTION</scope>
    <scope>TISSUE SPECIFICITY</scope>
    <source>
        <tissue>Embryo</tissue>
    </source>
</reference>
<reference key="3">
    <citation type="journal article" date="1997" name="Proc. Natl. Acad. Sci. U.S.A.">
        <title>A family of secreted proteins contains homology to the cysteine-rich ligand-binding domain of frizzled receptors.</title>
        <authorList>
            <person name="Rattner A."/>
            <person name="Hsieh J.-C."/>
            <person name="Smallwood P.M."/>
            <person name="Gilbert D.J."/>
            <person name="Copeland N.G."/>
            <person name="Jenkins N.A."/>
            <person name="Nathans J."/>
        </authorList>
    </citation>
    <scope>NUCLEOTIDE SEQUENCE [MRNA]</scope>
    <scope>TISSUE SPECIFICITY</scope>
</reference>
<reference key="4">
    <citation type="journal article" date="2005" name="Science">
        <title>The transcriptional landscape of the mammalian genome.</title>
        <authorList>
            <person name="Carninci P."/>
            <person name="Kasukawa T."/>
            <person name="Katayama S."/>
            <person name="Gough J."/>
            <person name="Frith M.C."/>
            <person name="Maeda N."/>
            <person name="Oyama R."/>
            <person name="Ravasi T."/>
            <person name="Lenhard B."/>
            <person name="Wells C."/>
            <person name="Kodzius R."/>
            <person name="Shimokawa K."/>
            <person name="Bajic V.B."/>
            <person name="Brenner S.E."/>
            <person name="Batalov S."/>
            <person name="Forrest A.R."/>
            <person name="Zavolan M."/>
            <person name="Davis M.J."/>
            <person name="Wilming L.G."/>
            <person name="Aidinis V."/>
            <person name="Allen J.E."/>
            <person name="Ambesi-Impiombato A."/>
            <person name="Apweiler R."/>
            <person name="Aturaliya R.N."/>
            <person name="Bailey T.L."/>
            <person name="Bansal M."/>
            <person name="Baxter L."/>
            <person name="Beisel K.W."/>
            <person name="Bersano T."/>
            <person name="Bono H."/>
            <person name="Chalk A.M."/>
            <person name="Chiu K.P."/>
            <person name="Choudhary V."/>
            <person name="Christoffels A."/>
            <person name="Clutterbuck D.R."/>
            <person name="Crowe M.L."/>
            <person name="Dalla E."/>
            <person name="Dalrymple B.P."/>
            <person name="de Bono B."/>
            <person name="Della Gatta G."/>
            <person name="di Bernardo D."/>
            <person name="Down T."/>
            <person name="Engstrom P."/>
            <person name="Fagiolini M."/>
            <person name="Faulkner G."/>
            <person name="Fletcher C.F."/>
            <person name="Fukushima T."/>
            <person name="Furuno M."/>
            <person name="Futaki S."/>
            <person name="Gariboldi M."/>
            <person name="Georgii-Hemming P."/>
            <person name="Gingeras T.R."/>
            <person name="Gojobori T."/>
            <person name="Green R.E."/>
            <person name="Gustincich S."/>
            <person name="Harbers M."/>
            <person name="Hayashi Y."/>
            <person name="Hensch T.K."/>
            <person name="Hirokawa N."/>
            <person name="Hill D."/>
            <person name="Huminiecki L."/>
            <person name="Iacono M."/>
            <person name="Ikeo K."/>
            <person name="Iwama A."/>
            <person name="Ishikawa T."/>
            <person name="Jakt M."/>
            <person name="Kanapin A."/>
            <person name="Katoh M."/>
            <person name="Kawasawa Y."/>
            <person name="Kelso J."/>
            <person name="Kitamura H."/>
            <person name="Kitano H."/>
            <person name="Kollias G."/>
            <person name="Krishnan S.P."/>
            <person name="Kruger A."/>
            <person name="Kummerfeld S.K."/>
            <person name="Kurochkin I.V."/>
            <person name="Lareau L.F."/>
            <person name="Lazarevic D."/>
            <person name="Lipovich L."/>
            <person name="Liu J."/>
            <person name="Liuni S."/>
            <person name="McWilliam S."/>
            <person name="Madan Babu M."/>
            <person name="Madera M."/>
            <person name="Marchionni L."/>
            <person name="Matsuda H."/>
            <person name="Matsuzawa S."/>
            <person name="Miki H."/>
            <person name="Mignone F."/>
            <person name="Miyake S."/>
            <person name="Morris K."/>
            <person name="Mottagui-Tabar S."/>
            <person name="Mulder N."/>
            <person name="Nakano N."/>
            <person name="Nakauchi H."/>
            <person name="Ng P."/>
            <person name="Nilsson R."/>
            <person name="Nishiguchi S."/>
            <person name="Nishikawa S."/>
            <person name="Nori F."/>
            <person name="Ohara O."/>
            <person name="Okazaki Y."/>
            <person name="Orlando V."/>
            <person name="Pang K.C."/>
            <person name="Pavan W.J."/>
            <person name="Pavesi G."/>
            <person name="Pesole G."/>
            <person name="Petrovsky N."/>
            <person name="Piazza S."/>
            <person name="Reed J."/>
            <person name="Reid J.F."/>
            <person name="Ring B.Z."/>
            <person name="Ringwald M."/>
            <person name="Rost B."/>
            <person name="Ruan Y."/>
            <person name="Salzberg S.L."/>
            <person name="Sandelin A."/>
            <person name="Schneider C."/>
            <person name="Schoenbach C."/>
            <person name="Sekiguchi K."/>
            <person name="Semple C.A."/>
            <person name="Seno S."/>
            <person name="Sessa L."/>
            <person name="Sheng Y."/>
            <person name="Shibata Y."/>
            <person name="Shimada H."/>
            <person name="Shimada K."/>
            <person name="Silva D."/>
            <person name="Sinclair B."/>
            <person name="Sperling S."/>
            <person name="Stupka E."/>
            <person name="Sugiura K."/>
            <person name="Sultana R."/>
            <person name="Takenaka Y."/>
            <person name="Taki K."/>
            <person name="Tammoja K."/>
            <person name="Tan S.L."/>
            <person name="Tang S."/>
            <person name="Taylor M.S."/>
            <person name="Tegner J."/>
            <person name="Teichmann S.A."/>
            <person name="Ueda H.R."/>
            <person name="van Nimwegen E."/>
            <person name="Verardo R."/>
            <person name="Wei C.L."/>
            <person name="Yagi K."/>
            <person name="Yamanishi H."/>
            <person name="Zabarovsky E."/>
            <person name="Zhu S."/>
            <person name="Zimmer A."/>
            <person name="Hide W."/>
            <person name="Bult C."/>
            <person name="Grimmond S.M."/>
            <person name="Teasdale R.D."/>
            <person name="Liu E.T."/>
            <person name="Brusic V."/>
            <person name="Quackenbush J."/>
            <person name="Wahlestedt C."/>
            <person name="Mattick J.S."/>
            <person name="Hume D.A."/>
            <person name="Kai C."/>
            <person name="Sasaki D."/>
            <person name="Tomaru Y."/>
            <person name="Fukuda S."/>
            <person name="Kanamori-Katayama M."/>
            <person name="Suzuki M."/>
            <person name="Aoki J."/>
            <person name="Arakawa T."/>
            <person name="Iida J."/>
            <person name="Imamura K."/>
            <person name="Itoh M."/>
            <person name="Kato T."/>
            <person name="Kawaji H."/>
            <person name="Kawagashira N."/>
            <person name="Kawashima T."/>
            <person name="Kojima M."/>
            <person name="Kondo S."/>
            <person name="Konno H."/>
            <person name="Nakano K."/>
            <person name="Ninomiya N."/>
            <person name="Nishio T."/>
            <person name="Okada M."/>
            <person name="Plessy C."/>
            <person name="Shibata K."/>
            <person name="Shiraki T."/>
            <person name="Suzuki S."/>
            <person name="Tagami M."/>
            <person name="Waki K."/>
            <person name="Watahiki A."/>
            <person name="Okamura-Oho Y."/>
            <person name="Suzuki H."/>
            <person name="Kawai J."/>
            <person name="Hayashizaki Y."/>
        </authorList>
    </citation>
    <scope>NUCLEOTIDE SEQUENCE [LARGE SCALE MRNA]</scope>
    <source>
        <strain>C57BL/6J</strain>
        <tissue>Tongue</tissue>
    </source>
</reference>
<reference key="5">
    <citation type="journal article" date="2004" name="Genome Res.">
        <title>The status, quality, and expansion of the NIH full-length cDNA project: the Mammalian Gene Collection (MGC).</title>
        <authorList>
            <consortium name="The MGC Project Team"/>
        </authorList>
    </citation>
    <scope>NUCLEOTIDE SEQUENCE [LARGE SCALE MRNA]</scope>
    <source>
        <tissue>Kidney</tissue>
    </source>
</reference>
<reference key="6">
    <citation type="journal article" date="2009" name="Mol. Cell. Biol.">
        <title>Myocilin is a modulator of Wnt signaling.</title>
        <authorList>
            <person name="Kwon H.S."/>
            <person name="Lee H.S."/>
            <person name="Ji Y."/>
            <person name="Rubin J.S."/>
            <person name="Tomarev S.I."/>
        </authorList>
    </citation>
    <scope>INTERACTION WITH MYOC</scope>
</reference>
<reference key="7">
    <citation type="journal article" date="2001" name="Nature">
        <title>Insights into Wnt binding and signalling from the structures of two Frizzled cysteine-rich domains.</title>
        <authorList>
            <person name="Dann C.E."/>
            <person name="Hsieh J.-C."/>
            <person name="Rattner A."/>
            <person name="Sharma D."/>
            <person name="Nathans J."/>
            <person name="Leahy D.J."/>
        </authorList>
    </citation>
    <scope>X-RAY CRYSTALLOGRAPHY (1.9 ANGSTROMS) OF 33-157</scope>
    <scope>DISULFIDE BONDS</scope>
</reference>
<name>SFRP3_MOUSE</name>
<feature type="signal peptide" evidence="2">
    <location>
        <begin position="1"/>
        <end position="32"/>
    </location>
</feature>
<feature type="chain" id="PRO_0000032547" description="Secreted frizzled-related protein 3">
    <location>
        <begin position="33"/>
        <end position="323"/>
    </location>
</feature>
<feature type="domain" description="FZ" evidence="3">
    <location>
        <begin position="33"/>
        <end position="150"/>
    </location>
</feature>
<feature type="domain" description="NTR" evidence="4">
    <location>
        <begin position="178"/>
        <end position="298"/>
    </location>
</feature>
<feature type="region of interest" description="Disordered" evidence="5">
    <location>
        <begin position="299"/>
        <end position="323"/>
    </location>
</feature>
<feature type="compositionally biased region" description="Polar residues" evidence="5">
    <location>
        <begin position="304"/>
        <end position="323"/>
    </location>
</feature>
<feature type="glycosylation site" description="N-linked (GlcNAc...) asparagine" evidence="2">
    <location>
        <position position="49"/>
    </location>
</feature>
<feature type="disulfide bond" evidence="6">
    <location>
        <begin position="35"/>
        <end position="96"/>
    </location>
</feature>
<feature type="disulfide bond" evidence="6">
    <location>
        <begin position="43"/>
        <end position="89"/>
    </location>
</feature>
<feature type="disulfide bond" evidence="6">
    <location>
        <begin position="80"/>
        <end position="119"/>
    </location>
</feature>
<feature type="disulfide bond" evidence="6">
    <location>
        <begin position="108"/>
        <end position="147"/>
    </location>
</feature>
<feature type="disulfide bond" evidence="6">
    <location>
        <begin position="112"/>
        <end position="136"/>
    </location>
</feature>
<feature type="sequence conflict" description="In Ref. 5; AAH16884." evidence="10" ref="5">
    <original>A</original>
    <variation>V</variation>
    <location>
        <position position="321"/>
    </location>
</feature>
<feature type="helix" evidence="11">
    <location>
        <begin position="41"/>
        <end position="45"/>
    </location>
</feature>
<feature type="helix" evidence="11">
    <location>
        <begin position="62"/>
        <end position="70"/>
    </location>
</feature>
<feature type="helix" evidence="11">
    <location>
        <begin position="73"/>
        <end position="76"/>
    </location>
</feature>
<feature type="turn" evidence="11">
    <location>
        <begin position="77"/>
        <end position="79"/>
    </location>
</feature>
<feature type="helix" evidence="11">
    <location>
        <begin position="84"/>
        <end position="92"/>
    </location>
</feature>
<feature type="strand" evidence="11">
    <location>
        <begin position="97"/>
        <end position="99"/>
    </location>
</feature>
<feature type="strand" evidence="11">
    <location>
        <begin position="101"/>
        <end position="103"/>
    </location>
</feature>
<feature type="helix" evidence="11">
    <location>
        <begin position="109"/>
        <end position="125"/>
    </location>
</feature>
<feature type="helix" evidence="11">
    <location>
        <begin position="132"/>
        <end position="134"/>
    </location>
</feature>
<feature type="helix" evidence="11">
    <location>
        <begin position="136"/>
        <end position="138"/>
    </location>
</feature>
<feature type="turn" evidence="11">
    <location>
        <begin position="142"/>
        <end position="144"/>
    </location>
</feature>
<feature type="strand" evidence="11">
    <location>
        <begin position="146"/>
        <end position="150"/>
    </location>
</feature>
<keyword id="KW-0002">3D-structure</keyword>
<keyword id="KW-0217">Developmental protein</keyword>
<keyword id="KW-0221">Differentiation</keyword>
<keyword id="KW-1015">Disulfide bond</keyword>
<keyword id="KW-0325">Glycoprotein</keyword>
<keyword id="KW-1185">Reference proteome</keyword>
<keyword id="KW-0964">Secreted</keyword>
<keyword id="KW-0732">Signal</keyword>
<keyword id="KW-0879">Wnt signaling pathway</keyword>
<comment type="function">
    <text evidence="1 9">Soluble frizzled-related proteins (sFRPS) function as modulators of Wnt signaling through direct interaction with Wnts. They have a role in regulating cell growth and differentiation in specific cell types. SFRP3/FRZB appears to be involved in limb skeletogenesis. Antagonist of Wnt8 signaling. Regulates chondrocyte maturation and long bone development (By similarity).</text>
</comment>
<comment type="subunit">
    <text evidence="7">Interacts with MYOC.</text>
</comment>
<comment type="subcellular location">
    <subcellularLocation>
        <location evidence="10">Secreted</location>
    </subcellularLocation>
</comment>
<comment type="tissue specificity">
    <text evidence="8 9">Expressed in kidney, brain, testis. Weak expression in spleen and heart.</text>
</comment>
<comment type="developmental stage">
    <text>In early gastrulation, expressed in all three germ layers. In later embryogenesis, expressed in a range of tissues including the central and peripheral nervous systems and the nephogenic mesenchyme.</text>
</comment>
<comment type="domain">
    <text evidence="1">The FZ domain is involved in binding with Wnt ligands.</text>
</comment>
<comment type="similarity">
    <text evidence="10">Belongs to the secreted frizzled-related protein (sFRP) family.</text>
</comment>
<protein>
    <recommendedName>
        <fullName>Secreted frizzled-related protein 3</fullName>
        <shortName>sFRP-3</shortName>
    </recommendedName>
    <alternativeName>
        <fullName>Frezzled</fullName>
    </alternativeName>
    <alternativeName>
        <fullName>Fritz</fullName>
    </alternativeName>
    <alternativeName>
        <fullName>Frizzled-related protein 1</fullName>
    </alternativeName>
    <alternativeName>
        <fullName>FrzB-1</fullName>
    </alternativeName>
</protein>
<proteinExistence type="evidence at protein level"/>
<gene>
    <name type="primary">Frzb</name>
    <name type="synonym">Fiz</name>
    <name type="synonym">Fre</name>
    <name type="synonym">Frzb1</name>
    <name type="synonym">Sfrp3</name>
</gene>
<accession>P97401</accession>
<accession>O09075</accession>
<accession>O09093</accession>
<accession>Q91W58</accession>
<evidence type="ECO:0000250" key="1"/>
<evidence type="ECO:0000255" key="2"/>
<evidence type="ECO:0000255" key="3">
    <source>
        <dbReference type="PROSITE-ProRule" id="PRU00090"/>
    </source>
</evidence>
<evidence type="ECO:0000255" key="4">
    <source>
        <dbReference type="PROSITE-ProRule" id="PRU00295"/>
    </source>
</evidence>
<evidence type="ECO:0000256" key="5">
    <source>
        <dbReference type="SAM" id="MobiDB-lite"/>
    </source>
</evidence>
<evidence type="ECO:0000269" key="6">
    <source>
    </source>
</evidence>
<evidence type="ECO:0000269" key="7">
    <source>
    </source>
</evidence>
<evidence type="ECO:0000269" key="8">
    <source>
    </source>
</evidence>
<evidence type="ECO:0000269" key="9">
    <source>
    </source>
</evidence>
<evidence type="ECO:0000305" key="10"/>
<evidence type="ECO:0007829" key="11">
    <source>
        <dbReference type="PDB" id="1IJX"/>
    </source>
</evidence>
<sequence length="323" mass="36011">MVCCGPGRMLLGWAGLLVLAALCLLQVPGAQAAACEPVRIPLCKSLPWNMTKMPNHLHHSTQANAILAMEQFEGLLGTHCSPDLLFFLCAMYAPICTIDFQHEPIKPCKSVCERARQGCEPILIKYRHSWPESLACDELPVYDRGVCISPEAIVTADGADFPMDSSTGHCRGASSERCKCKPVRATQKTYFRNNYNYVIRAKVKEVKMKCHDVTAVVEVKEILKASLVNIPRDTVNLYTTSGCLCPPLTVNEEYVIMGYEDEERSRLLLVEGSIAEKWKDRLGKKVKRWDMKLRHLGLGKTDASDSTQNQKSGRNSNPRPARS</sequence>
<organism>
    <name type="scientific">Mus musculus</name>
    <name type="common">Mouse</name>
    <dbReference type="NCBI Taxonomy" id="10090"/>
    <lineage>
        <taxon>Eukaryota</taxon>
        <taxon>Metazoa</taxon>
        <taxon>Chordata</taxon>
        <taxon>Craniata</taxon>
        <taxon>Vertebrata</taxon>
        <taxon>Euteleostomi</taxon>
        <taxon>Mammalia</taxon>
        <taxon>Eutheria</taxon>
        <taxon>Euarchontoglires</taxon>
        <taxon>Glires</taxon>
        <taxon>Rodentia</taxon>
        <taxon>Myomorpha</taxon>
        <taxon>Muroidea</taxon>
        <taxon>Muridae</taxon>
        <taxon>Murinae</taxon>
        <taxon>Mus</taxon>
        <taxon>Mus</taxon>
    </lineage>
</organism>